<reference key="1">
    <citation type="submission" date="1996-03" db="EMBL/GenBank/DDBJ databases">
        <authorList>
            <person name="Ahrens M."/>
            <person name="Schroeder D."/>
            <person name="Gross G."/>
        </authorList>
    </citation>
    <scope>NUCLEOTIDE SEQUENCE</scope>
</reference>
<reference key="2">
    <citation type="submission" date="2001-05" db="EMBL/GenBank/DDBJ databases">
        <authorList>
            <person name="Kay M."/>
        </authorList>
    </citation>
    <scope>NUCLEOTIDE SEQUENCE</scope>
</reference>
<reference key="3">
    <citation type="journal article" date="2010" name="Cell">
        <title>A tissue-specific atlas of mouse protein phosphorylation and expression.</title>
        <authorList>
            <person name="Huttlin E.L."/>
            <person name="Jedrychowski M.P."/>
            <person name="Elias J.E."/>
            <person name="Goswami T."/>
            <person name="Rad R."/>
            <person name="Beausoleil S.A."/>
            <person name="Villen J."/>
            <person name="Haas W."/>
            <person name="Sowa M.E."/>
            <person name="Gygi S.P."/>
        </authorList>
    </citation>
    <scope>IDENTIFICATION BY MASS SPECTROMETRY [LARGE SCALE ANALYSIS]</scope>
    <source>
        <tissue>Brown adipose tissue</tissue>
    </source>
</reference>
<protein>
    <recommendedName>
        <fullName>G0/G1 switch protein 2</fullName>
    </recommendedName>
    <alternativeName>
        <fullName>G0S2-like protein</fullName>
    </alternativeName>
</protein>
<sequence>MESVQELIPLAKEMMAQKPRGKLVKLYVLGSVLALFGVVLGLVETVCSPFTAASRLRDQEAAVVELREACEQQSLHKQALLAGGKAQEATLCSRALSLRQHAS</sequence>
<comment type="function">
    <text evidence="1">Promotes apoptosis by binding to BCL2, hence preventing the formation of protective BCL2-BAX heterodimers.</text>
</comment>
<comment type="subunit">
    <text evidence="1">Directly interacts with BCL2; this interaction prevents the formation of the anti-apoptotic BAX-BCL2 complex.</text>
</comment>
<comment type="subcellular location">
    <subcellularLocation>
        <location evidence="1">Mitochondrion</location>
    </subcellularLocation>
</comment>
<keyword id="KW-0053">Apoptosis</keyword>
<keyword id="KW-0496">Mitochondrion</keyword>
<keyword id="KW-1185">Reference proteome</keyword>
<feature type="chain" id="PRO_0000087406" description="G0/G1 switch protein 2">
    <location>
        <begin position="1"/>
        <end position="103"/>
    </location>
</feature>
<organism>
    <name type="scientific">Mus musculus</name>
    <name type="common">Mouse</name>
    <dbReference type="NCBI Taxonomy" id="10090"/>
    <lineage>
        <taxon>Eukaryota</taxon>
        <taxon>Metazoa</taxon>
        <taxon>Chordata</taxon>
        <taxon>Craniata</taxon>
        <taxon>Vertebrata</taxon>
        <taxon>Euteleostomi</taxon>
        <taxon>Mammalia</taxon>
        <taxon>Eutheria</taxon>
        <taxon>Euarchontoglires</taxon>
        <taxon>Glires</taxon>
        <taxon>Rodentia</taxon>
        <taxon>Myomorpha</taxon>
        <taxon>Muroidea</taxon>
        <taxon>Muridae</taxon>
        <taxon>Murinae</taxon>
        <taxon>Mus</taxon>
        <taxon>Mus</taxon>
    </lineage>
</organism>
<proteinExistence type="evidence at protein level"/>
<gene>
    <name type="primary">G0s2</name>
</gene>
<dbReference type="EMBL" id="X95280">
    <property type="protein sequence ID" value="CAA64601.1"/>
    <property type="molecule type" value="mRNA"/>
</dbReference>
<dbReference type="EMBL" id="AL365314">
    <property type="status" value="NOT_ANNOTATED_CDS"/>
    <property type="molecule type" value="Genomic_DNA"/>
</dbReference>
<dbReference type="CCDS" id="CCDS15636.1"/>
<dbReference type="RefSeq" id="NP_032085.1">
    <property type="nucleotide sequence ID" value="NM_008059.3"/>
</dbReference>
<dbReference type="BioGRID" id="199784">
    <property type="interactions" value="1"/>
</dbReference>
<dbReference type="DIP" id="DIP-61640N"/>
<dbReference type="FunCoup" id="Q61585">
    <property type="interactions" value="486"/>
</dbReference>
<dbReference type="IntAct" id="Q61585">
    <property type="interactions" value="1"/>
</dbReference>
<dbReference type="STRING" id="10090.ENSMUSP00000009777"/>
<dbReference type="iPTMnet" id="Q61585"/>
<dbReference type="PhosphoSitePlus" id="Q61585"/>
<dbReference type="PaxDb" id="10090-ENSMUSP00000009777"/>
<dbReference type="ProteomicsDB" id="271622"/>
<dbReference type="Antibodypedia" id="2397">
    <property type="antibodies" value="139 antibodies from 25 providers"/>
</dbReference>
<dbReference type="DNASU" id="14373"/>
<dbReference type="Ensembl" id="ENSMUST00000009777.4">
    <property type="protein sequence ID" value="ENSMUSP00000009777.3"/>
    <property type="gene ID" value="ENSMUSG00000009633.4"/>
</dbReference>
<dbReference type="GeneID" id="14373"/>
<dbReference type="KEGG" id="mmu:14373"/>
<dbReference type="UCSC" id="uc007eei.2">
    <property type="organism name" value="mouse"/>
</dbReference>
<dbReference type="AGR" id="MGI:1316737"/>
<dbReference type="CTD" id="50486"/>
<dbReference type="MGI" id="MGI:1316737">
    <property type="gene designation" value="G0s2"/>
</dbReference>
<dbReference type="VEuPathDB" id="HostDB:ENSMUSG00000009633"/>
<dbReference type="eggNOG" id="ENOG502S7WP">
    <property type="taxonomic scope" value="Eukaryota"/>
</dbReference>
<dbReference type="GeneTree" id="ENSGT00390000005294"/>
<dbReference type="HOGENOM" id="CLU_138623_0_0_1"/>
<dbReference type="InParanoid" id="Q61585"/>
<dbReference type="OMA" id="CEQQSLH"/>
<dbReference type="OrthoDB" id="9373743at2759"/>
<dbReference type="PhylomeDB" id="Q61585"/>
<dbReference type="TreeFam" id="TF336218"/>
<dbReference type="BioGRID-ORCS" id="14373">
    <property type="hits" value="1 hit in 76 CRISPR screens"/>
</dbReference>
<dbReference type="ChiTaRS" id="G0s2">
    <property type="organism name" value="mouse"/>
</dbReference>
<dbReference type="PRO" id="PR:Q61585"/>
<dbReference type="Proteomes" id="UP000000589">
    <property type="component" value="Chromosome 1"/>
</dbReference>
<dbReference type="RNAct" id="Q61585">
    <property type="molecule type" value="protein"/>
</dbReference>
<dbReference type="Bgee" id="ENSMUSG00000009633">
    <property type="expression patterns" value="Expressed in granulocyte and 239 other cell types or tissues"/>
</dbReference>
<dbReference type="ExpressionAtlas" id="Q61585">
    <property type="expression patterns" value="baseline and differential"/>
</dbReference>
<dbReference type="GO" id="GO:0005739">
    <property type="term" value="C:mitochondrion"/>
    <property type="evidence" value="ECO:0000250"/>
    <property type="project" value="UniProtKB"/>
</dbReference>
<dbReference type="GO" id="GO:0097191">
    <property type="term" value="P:extrinsic apoptotic signaling pathway"/>
    <property type="evidence" value="ECO:0000250"/>
    <property type="project" value="UniProtKB"/>
</dbReference>
<dbReference type="GO" id="GO:0120162">
    <property type="term" value="P:positive regulation of cold-induced thermogenesis"/>
    <property type="evidence" value="ECO:0000315"/>
    <property type="project" value="YuBioLab"/>
</dbReference>
<dbReference type="GO" id="GO:2001238">
    <property type="term" value="P:positive regulation of extrinsic apoptotic signaling pathway"/>
    <property type="evidence" value="ECO:0000250"/>
    <property type="project" value="UniProtKB"/>
</dbReference>
<dbReference type="InterPro" id="IPR016821">
    <property type="entry name" value="G0S2"/>
</dbReference>
<dbReference type="PANTHER" id="PTHR15570">
    <property type="entry name" value="G0/G1 SWITCH PROTEIN 2"/>
    <property type="match status" value="1"/>
</dbReference>
<dbReference type="PANTHER" id="PTHR15570:SF2">
    <property type="entry name" value="G0_G1 SWITCH PROTEIN 2"/>
    <property type="match status" value="1"/>
</dbReference>
<dbReference type="Pfam" id="PF15103">
    <property type="entry name" value="G0-G1_switch_2"/>
    <property type="match status" value="1"/>
</dbReference>
<dbReference type="PIRSF" id="PIRSF023925">
    <property type="entry name" value="G0/G1_switch_p2"/>
    <property type="match status" value="1"/>
</dbReference>
<accession>Q61585</accession>
<name>G0S2_MOUSE</name>
<evidence type="ECO:0000250" key="1"/>